<feature type="chain" id="PRO_1000195385" description="Recombination protein RecR">
    <location>
        <begin position="1"/>
        <end position="201"/>
    </location>
</feature>
<feature type="domain" description="Toprim" evidence="1">
    <location>
        <begin position="81"/>
        <end position="176"/>
    </location>
</feature>
<feature type="zinc finger region" description="C4-type" evidence="1">
    <location>
        <begin position="57"/>
        <end position="72"/>
    </location>
</feature>
<sequence>MQTSPLLTQLMEALRCLPGVGPKSAQRMAFTLLQRDRSGGMRLAQALTRAMSEIGHCADCRTFTEQEVCNICSNPRRQENGQICVVESPADIYAIEQTGQFSGRYFVLMGHLSPLDGIGPDDIGLDRLEQRLAEEKITEVILATNPTVEGEATANYIAELCAQYGVEASRIAHGVPVGGELEMVDGTTLSHSLAGRHKIRF</sequence>
<name>RECR_ECOLU</name>
<accession>B7N925</accession>
<reference key="1">
    <citation type="journal article" date="2009" name="PLoS Genet.">
        <title>Organised genome dynamics in the Escherichia coli species results in highly diverse adaptive paths.</title>
        <authorList>
            <person name="Touchon M."/>
            <person name="Hoede C."/>
            <person name="Tenaillon O."/>
            <person name="Barbe V."/>
            <person name="Baeriswyl S."/>
            <person name="Bidet P."/>
            <person name="Bingen E."/>
            <person name="Bonacorsi S."/>
            <person name="Bouchier C."/>
            <person name="Bouvet O."/>
            <person name="Calteau A."/>
            <person name="Chiapello H."/>
            <person name="Clermont O."/>
            <person name="Cruveiller S."/>
            <person name="Danchin A."/>
            <person name="Diard M."/>
            <person name="Dossat C."/>
            <person name="Karoui M.E."/>
            <person name="Frapy E."/>
            <person name="Garry L."/>
            <person name="Ghigo J.M."/>
            <person name="Gilles A.M."/>
            <person name="Johnson J."/>
            <person name="Le Bouguenec C."/>
            <person name="Lescat M."/>
            <person name="Mangenot S."/>
            <person name="Martinez-Jehanne V."/>
            <person name="Matic I."/>
            <person name="Nassif X."/>
            <person name="Oztas S."/>
            <person name="Petit M.A."/>
            <person name="Pichon C."/>
            <person name="Rouy Z."/>
            <person name="Ruf C.S."/>
            <person name="Schneider D."/>
            <person name="Tourret J."/>
            <person name="Vacherie B."/>
            <person name="Vallenet D."/>
            <person name="Medigue C."/>
            <person name="Rocha E.P.C."/>
            <person name="Denamur E."/>
        </authorList>
    </citation>
    <scope>NUCLEOTIDE SEQUENCE [LARGE SCALE GENOMIC DNA]</scope>
    <source>
        <strain>UMN026 / ExPEC</strain>
    </source>
</reference>
<protein>
    <recommendedName>
        <fullName evidence="1">Recombination protein RecR</fullName>
    </recommendedName>
</protein>
<proteinExistence type="inferred from homology"/>
<comment type="function">
    <text evidence="1">May play a role in DNA repair. It seems to be involved in an RecBC-independent recombinational process of DNA repair. It may act with RecF and RecO.</text>
</comment>
<comment type="similarity">
    <text evidence="1">Belongs to the RecR family.</text>
</comment>
<organism>
    <name type="scientific">Escherichia coli O17:K52:H18 (strain UMN026 / ExPEC)</name>
    <dbReference type="NCBI Taxonomy" id="585056"/>
    <lineage>
        <taxon>Bacteria</taxon>
        <taxon>Pseudomonadati</taxon>
        <taxon>Pseudomonadota</taxon>
        <taxon>Gammaproteobacteria</taxon>
        <taxon>Enterobacterales</taxon>
        <taxon>Enterobacteriaceae</taxon>
        <taxon>Escherichia</taxon>
    </lineage>
</organism>
<dbReference type="EMBL" id="CU928163">
    <property type="protein sequence ID" value="CAR11726.1"/>
    <property type="molecule type" value="Genomic_DNA"/>
</dbReference>
<dbReference type="RefSeq" id="WP_001195026.1">
    <property type="nucleotide sequence ID" value="NC_011751.1"/>
</dbReference>
<dbReference type="RefSeq" id="YP_002411274.1">
    <property type="nucleotide sequence ID" value="NC_011751.1"/>
</dbReference>
<dbReference type="SMR" id="B7N925"/>
<dbReference type="STRING" id="585056.ECUMN_0511"/>
<dbReference type="GeneID" id="89519809"/>
<dbReference type="KEGG" id="eum:ECUMN_0511"/>
<dbReference type="PATRIC" id="fig|585056.7.peg.718"/>
<dbReference type="HOGENOM" id="CLU_060739_1_2_6"/>
<dbReference type="Proteomes" id="UP000007097">
    <property type="component" value="Chromosome"/>
</dbReference>
<dbReference type="GO" id="GO:0003677">
    <property type="term" value="F:DNA binding"/>
    <property type="evidence" value="ECO:0007669"/>
    <property type="project" value="UniProtKB-UniRule"/>
</dbReference>
<dbReference type="GO" id="GO:0008270">
    <property type="term" value="F:zinc ion binding"/>
    <property type="evidence" value="ECO:0007669"/>
    <property type="project" value="UniProtKB-KW"/>
</dbReference>
<dbReference type="GO" id="GO:0006310">
    <property type="term" value="P:DNA recombination"/>
    <property type="evidence" value="ECO:0007669"/>
    <property type="project" value="UniProtKB-UniRule"/>
</dbReference>
<dbReference type="GO" id="GO:0006281">
    <property type="term" value="P:DNA repair"/>
    <property type="evidence" value="ECO:0007669"/>
    <property type="project" value="UniProtKB-UniRule"/>
</dbReference>
<dbReference type="CDD" id="cd01025">
    <property type="entry name" value="TOPRIM_recR"/>
    <property type="match status" value="1"/>
</dbReference>
<dbReference type="FunFam" id="1.10.8.420:FF:000001">
    <property type="entry name" value="Recombination protein RecR"/>
    <property type="match status" value="1"/>
</dbReference>
<dbReference type="FunFam" id="3.40.1360.10:FF:000001">
    <property type="entry name" value="Recombination protein RecR"/>
    <property type="match status" value="1"/>
</dbReference>
<dbReference type="Gene3D" id="3.40.1360.10">
    <property type="match status" value="1"/>
</dbReference>
<dbReference type="Gene3D" id="6.10.250.240">
    <property type="match status" value="1"/>
</dbReference>
<dbReference type="Gene3D" id="1.10.8.420">
    <property type="entry name" value="RecR Domain 1"/>
    <property type="match status" value="1"/>
</dbReference>
<dbReference type="HAMAP" id="MF_00017">
    <property type="entry name" value="RecR"/>
    <property type="match status" value="1"/>
</dbReference>
<dbReference type="InterPro" id="IPR000093">
    <property type="entry name" value="DNA_Rcmb_RecR"/>
</dbReference>
<dbReference type="InterPro" id="IPR023627">
    <property type="entry name" value="Rcmb_RecR"/>
</dbReference>
<dbReference type="InterPro" id="IPR015967">
    <property type="entry name" value="Rcmb_RecR_Znf"/>
</dbReference>
<dbReference type="InterPro" id="IPR006171">
    <property type="entry name" value="TOPRIM_dom"/>
</dbReference>
<dbReference type="InterPro" id="IPR034137">
    <property type="entry name" value="TOPRIM_RecR"/>
</dbReference>
<dbReference type="NCBIfam" id="TIGR00615">
    <property type="entry name" value="recR"/>
    <property type="match status" value="1"/>
</dbReference>
<dbReference type="PANTHER" id="PTHR30446">
    <property type="entry name" value="RECOMBINATION PROTEIN RECR"/>
    <property type="match status" value="1"/>
</dbReference>
<dbReference type="PANTHER" id="PTHR30446:SF0">
    <property type="entry name" value="RECOMBINATION PROTEIN RECR"/>
    <property type="match status" value="1"/>
</dbReference>
<dbReference type="Pfam" id="PF21175">
    <property type="entry name" value="RecR_C"/>
    <property type="match status" value="1"/>
</dbReference>
<dbReference type="Pfam" id="PF21176">
    <property type="entry name" value="RecR_HhH"/>
    <property type="match status" value="1"/>
</dbReference>
<dbReference type="Pfam" id="PF02132">
    <property type="entry name" value="RecR_ZnF"/>
    <property type="match status" value="1"/>
</dbReference>
<dbReference type="Pfam" id="PF13662">
    <property type="entry name" value="Toprim_4"/>
    <property type="match status" value="1"/>
</dbReference>
<dbReference type="SMART" id="SM00493">
    <property type="entry name" value="TOPRIM"/>
    <property type="match status" value="1"/>
</dbReference>
<dbReference type="SUPFAM" id="SSF111304">
    <property type="entry name" value="Recombination protein RecR"/>
    <property type="match status" value="1"/>
</dbReference>
<dbReference type="PROSITE" id="PS01300">
    <property type="entry name" value="RECR"/>
    <property type="match status" value="1"/>
</dbReference>
<dbReference type="PROSITE" id="PS50880">
    <property type="entry name" value="TOPRIM"/>
    <property type="match status" value="1"/>
</dbReference>
<gene>
    <name evidence="1" type="primary">recR</name>
    <name type="ordered locus">ECUMN_0511</name>
</gene>
<evidence type="ECO:0000255" key="1">
    <source>
        <dbReference type="HAMAP-Rule" id="MF_00017"/>
    </source>
</evidence>
<keyword id="KW-0227">DNA damage</keyword>
<keyword id="KW-0233">DNA recombination</keyword>
<keyword id="KW-0234">DNA repair</keyword>
<keyword id="KW-0479">Metal-binding</keyword>
<keyword id="KW-0862">Zinc</keyword>
<keyword id="KW-0863">Zinc-finger</keyword>